<proteinExistence type="inferred from homology"/>
<dbReference type="EMBL" id="CM000127">
    <property type="protein sequence ID" value="EEC74174.1"/>
    <property type="molecule type" value="Genomic_DNA"/>
</dbReference>
<dbReference type="SMR" id="B8AEH1"/>
<dbReference type="STRING" id="39946.B8AEH1"/>
<dbReference type="EnsemblPlants" id="BGIOSGA005436-TA">
    <property type="protein sequence ID" value="BGIOSGA005436-PA"/>
    <property type="gene ID" value="BGIOSGA005436"/>
</dbReference>
<dbReference type="Gramene" id="BGIOSGA005436-TA">
    <property type="protein sequence ID" value="BGIOSGA005436-PA"/>
    <property type="gene ID" value="BGIOSGA005436"/>
</dbReference>
<dbReference type="HOGENOM" id="CLU_024359_0_0_1"/>
<dbReference type="OMA" id="AECTQAK"/>
<dbReference type="Proteomes" id="UP000007015">
    <property type="component" value="Chromosome 2"/>
</dbReference>
<dbReference type="GO" id="GO:0005634">
    <property type="term" value="C:nucleus"/>
    <property type="evidence" value="ECO:0007669"/>
    <property type="project" value="UniProtKB-SubCell"/>
</dbReference>
<dbReference type="GO" id="GO:0003677">
    <property type="term" value="F:DNA binding"/>
    <property type="evidence" value="ECO:0007669"/>
    <property type="project" value="UniProtKB-KW"/>
</dbReference>
<dbReference type="GO" id="GO:0003700">
    <property type="term" value="F:DNA-binding transcription factor activity"/>
    <property type="evidence" value="ECO:0007669"/>
    <property type="project" value="InterPro"/>
</dbReference>
<dbReference type="GO" id="GO:0009736">
    <property type="term" value="P:cytokinin-activated signaling pathway"/>
    <property type="evidence" value="ECO:0007669"/>
    <property type="project" value="UniProtKB-KW"/>
</dbReference>
<dbReference type="GO" id="GO:0000160">
    <property type="term" value="P:phosphorelay signal transduction system"/>
    <property type="evidence" value="ECO:0007669"/>
    <property type="project" value="UniProtKB-KW"/>
</dbReference>
<dbReference type="CDD" id="cd17584">
    <property type="entry name" value="REC_typeB_ARR-like"/>
    <property type="match status" value="1"/>
</dbReference>
<dbReference type="FunFam" id="1.10.10.60:FF:000007">
    <property type="entry name" value="Two-component response regulator"/>
    <property type="match status" value="1"/>
</dbReference>
<dbReference type="FunFam" id="3.40.50.2300:FF:000132">
    <property type="entry name" value="Two-component response regulator"/>
    <property type="match status" value="1"/>
</dbReference>
<dbReference type="Gene3D" id="3.40.50.2300">
    <property type="match status" value="1"/>
</dbReference>
<dbReference type="Gene3D" id="1.10.10.60">
    <property type="entry name" value="Homeodomain-like"/>
    <property type="match status" value="1"/>
</dbReference>
<dbReference type="InterPro" id="IPR045279">
    <property type="entry name" value="ARR-like"/>
</dbReference>
<dbReference type="InterPro" id="IPR011006">
    <property type="entry name" value="CheY-like_superfamily"/>
</dbReference>
<dbReference type="InterPro" id="IPR009057">
    <property type="entry name" value="Homeodomain-like_sf"/>
</dbReference>
<dbReference type="InterPro" id="IPR017930">
    <property type="entry name" value="Myb_dom"/>
</dbReference>
<dbReference type="InterPro" id="IPR006447">
    <property type="entry name" value="Myb_dom_plants"/>
</dbReference>
<dbReference type="InterPro" id="IPR017053">
    <property type="entry name" value="Response_reg_B-typ_pln"/>
</dbReference>
<dbReference type="InterPro" id="IPR001005">
    <property type="entry name" value="SANT/Myb"/>
</dbReference>
<dbReference type="InterPro" id="IPR001789">
    <property type="entry name" value="Sig_transdc_resp-reg_receiver"/>
</dbReference>
<dbReference type="NCBIfam" id="TIGR01557">
    <property type="entry name" value="myb_SHAQKYF"/>
    <property type="match status" value="1"/>
</dbReference>
<dbReference type="PANTHER" id="PTHR43874">
    <property type="entry name" value="TWO-COMPONENT RESPONSE REGULATOR"/>
    <property type="match status" value="1"/>
</dbReference>
<dbReference type="PANTHER" id="PTHR43874:SF205">
    <property type="entry name" value="TWO-COMPONENT RESPONSE REGULATOR ORR23"/>
    <property type="match status" value="1"/>
</dbReference>
<dbReference type="Pfam" id="PF00249">
    <property type="entry name" value="Myb_DNA-binding"/>
    <property type="match status" value="1"/>
</dbReference>
<dbReference type="Pfam" id="PF00072">
    <property type="entry name" value="Response_reg"/>
    <property type="match status" value="1"/>
</dbReference>
<dbReference type="PIRSF" id="PIRSF036392">
    <property type="entry name" value="RR_ARR_type-B"/>
    <property type="match status" value="1"/>
</dbReference>
<dbReference type="SMART" id="SM00448">
    <property type="entry name" value="REC"/>
    <property type="match status" value="1"/>
</dbReference>
<dbReference type="SUPFAM" id="SSF52172">
    <property type="entry name" value="CheY-like"/>
    <property type="match status" value="1"/>
</dbReference>
<dbReference type="SUPFAM" id="SSF46689">
    <property type="entry name" value="Homeodomain-like"/>
    <property type="match status" value="1"/>
</dbReference>
<dbReference type="PROSITE" id="PS51294">
    <property type="entry name" value="HTH_MYB"/>
    <property type="match status" value="1"/>
</dbReference>
<dbReference type="PROSITE" id="PS50110">
    <property type="entry name" value="RESPONSE_REGULATORY"/>
    <property type="match status" value="1"/>
</dbReference>
<protein>
    <recommendedName>
        <fullName evidence="5">Two-component response regulator ORR23</fullName>
    </recommendedName>
</protein>
<keyword id="KW-0010">Activator</keyword>
<keyword id="KW-0932">Cytokinin signaling pathway</keyword>
<keyword id="KW-0238">DNA-binding</keyword>
<keyword id="KW-0539">Nucleus</keyword>
<keyword id="KW-0597">Phosphoprotein</keyword>
<keyword id="KW-1185">Reference proteome</keyword>
<keyword id="KW-0804">Transcription</keyword>
<keyword id="KW-0805">Transcription regulation</keyword>
<keyword id="KW-0902">Two-component regulatory system</keyword>
<feature type="chain" id="PRO_0000433845" description="Two-component response regulator ORR23">
    <location>
        <begin position="1"/>
        <end position="688"/>
    </location>
</feature>
<feature type="domain" description="Response regulatory" evidence="2">
    <location>
        <begin position="25"/>
        <end position="140"/>
    </location>
</feature>
<feature type="DNA-binding region" description="Myb-like GARP" evidence="3">
    <location>
        <begin position="211"/>
        <end position="270"/>
    </location>
</feature>
<feature type="region of interest" description="Disordered" evidence="4">
    <location>
        <begin position="161"/>
        <end position="212"/>
    </location>
</feature>
<feature type="compositionally biased region" description="Acidic residues" evidence="4">
    <location>
        <begin position="193"/>
        <end position="208"/>
    </location>
</feature>
<feature type="modified residue" description="4-aspartylphosphate" evidence="2">
    <location>
        <position position="76"/>
    </location>
</feature>
<sequence>MRAAEERKGVVPAARRRDQFPVGMRVLAVDDDPVCLKVLETLLLRCQYHVTTTNQAAIALKMLRENRDMFDLVISDVHMPDMDGFKLLELVGLEMDLPVIMLSVNGETKTVLKGITHGACDYLLKPVRIEELRNIWQHVIRRKFSTRDRANLDFYEECNKPPNADSDHVHGHVTCGSPDQSGRPSKKRKEYCSEEEDEGEVNTQDIDDPSAPKKPRVVWSVELHRKFVAAVNQLGIDKAVPKRILELMNVEKLTRENVASHLQKYRLYLKRLSAVASQQVSIVAALGGRDPFLHMGGFEGLQGYQAFTSSAALSSFTPHGLLNSPRNNPAALGTQGVPASKSIQTMSGSHTLSHSINDANKYHLSLPGNQKGNLGQGLAASLGQTQMQQKWIHEETDDLSTILSGNGLSNGMSGTLQSVTSSPLLPQELAECTQAKIVSQPSIRTSSVSSEHIEGAVGVSSGLLESRVSQQSTIPLSGFSANGLLIHGSFNNTCANKLGGTSSSCAPARSSNDLMVARDTKGGASSFGGAMLLPPDTEQKYLNFGGGNGLKQKFDDRTADSLFDPKFVWSSVPSSQLASNIGAHHAMSQRWNNSSSNSSNIGARMIGQATSSGSTVIPQMKTDFLVSGDMAMPKNASDLSIPKLQSELSSSSCSFDGLLNSIVKVEKDDVTFSDDLGCGDFYSLGACI</sequence>
<accession>B8AEH1</accession>
<organism>
    <name type="scientific">Oryza sativa subsp. indica</name>
    <name type="common">Rice</name>
    <dbReference type="NCBI Taxonomy" id="39946"/>
    <lineage>
        <taxon>Eukaryota</taxon>
        <taxon>Viridiplantae</taxon>
        <taxon>Streptophyta</taxon>
        <taxon>Embryophyta</taxon>
        <taxon>Tracheophyta</taxon>
        <taxon>Spermatophyta</taxon>
        <taxon>Magnoliopsida</taxon>
        <taxon>Liliopsida</taxon>
        <taxon>Poales</taxon>
        <taxon>Poaceae</taxon>
        <taxon>BOP clade</taxon>
        <taxon>Oryzoideae</taxon>
        <taxon>Oryzeae</taxon>
        <taxon>Oryzinae</taxon>
        <taxon>Oryza</taxon>
        <taxon>Oryza sativa</taxon>
    </lineage>
</organism>
<evidence type="ECO:0000250" key="1">
    <source>
        <dbReference type="UniProtKB" id="Q940D0"/>
    </source>
</evidence>
<evidence type="ECO:0000255" key="2">
    <source>
        <dbReference type="PROSITE-ProRule" id="PRU00169"/>
    </source>
</evidence>
<evidence type="ECO:0000255" key="3">
    <source>
        <dbReference type="PROSITE-ProRule" id="PRU00625"/>
    </source>
</evidence>
<evidence type="ECO:0000256" key="4">
    <source>
        <dbReference type="SAM" id="MobiDB-lite"/>
    </source>
</evidence>
<evidence type="ECO:0000305" key="5"/>
<evidence type="ECO:0000312" key="6">
    <source>
        <dbReference type="EMBL" id="EEC74174.1"/>
    </source>
</evidence>
<gene>
    <name evidence="5" type="primary">RR23</name>
    <name evidence="6" type="ORF">OsI_09283</name>
</gene>
<comment type="function">
    <text evidence="1">Transcriptional activator that binds specific DNA sequence. Functions as a response regulator involved in His-to-Asp phosphorelay signal transduction system. Phosphorylation of the Asp residue in the receiver domain activates the ability of the protein to promote the transcription of target genes. May directly activate some type-A response regulators in response to cytokinins.</text>
</comment>
<comment type="subcellular location">
    <subcellularLocation>
        <location evidence="3">Nucleus</location>
    </subcellularLocation>
</comment>
<comment type="PTM">
    <text evidence="5">Two-component system major event consists of a His-to-Asp phosphorelay between a sensor histidine kinase (HK) and a response regulator (RR). In plants, the His-to-Asp phosphorelay involves an additional intermediate named Histidine-containing phosphotransfer protein (HPt). This multistep phosphorelay consists of a His-Asp-His-Asp sequential transfer of a phosphate group between first a His and an Asp of the HK protein, followed by the transfer to a conserved His of the HPt protein and finally the transfer to an Asp in the receiver domain of the RR protein.</text>
</comment>
<comment type="similarity">
    <text evidence="5">Belongs to the ARR family. Type-B subfamily.</text>
</comment>
<name>ORR23_ORYSI</name>
<reference key="1">
    <citation type="journal article" date="2005" name="PLoS Biol.">
        <title>The genomes of Oryza sativa: a history of duplications.</title>
        <authorList>
            <person name="Yu J."/>
            <person name="Wang J."/>
            <person name="Lin W."/>
            <person name="Li S."/>
            <person name="Li H."/>
            <person name="Zhou J."/>
            <person name="Ni P."/>
            <person name="Dong W."/>
            <person name="Hu S."/>
            <person name="Zeng C."/>
            <person name="Zhang J."/>
            <person name="Zhang Y."/>
            <person name="Li R."/>
            <person name="Xu Z."/>
            <person name="Li S."/>
            <person name="Li X."/>
            <person name="Zheng H."/>
            <person name="Cong L."/>
            <person name="Lin L."/>
            <person name="Yin J."/>
            <person name="Geng J."/>
            <person name="Li G."/>
            <person name="Shi J."/>
            <person name="Liu J."/>
            <person name="Lv H."/>
            <person name="Li J."/>
            <person name="Wang J."/>
            <person name="Deng Y."/>
            <person name="Ran L."/>
            <person name="Shi X."/>
            <person name="Wang X."/>
            <person name="Wu Q."/>
            <person name="Li C."/>
            <person name="Ren X."/>
            <person name="Wang J."/>
            <person name="Wang X."/>
            <person name="Li D."/>
            <person name="Liu D."/>
            <person name="Zhang X."/>
            <person name="Ji Z."/>
            <person name="Zhao W."/>
            <person name="Sun Y."/>
            <person name="Zhang Z."/>
            <person name="Bao J."/>
            <person name="Han Y."/>
            <person name="Dong L."/>
            <person name="Ji J."/>
            <person name="Chen P."/>
            <person name="Wu S."/>
            <person name="Liu J."/>
            <person name="Xiao Y."/>
            <person name="Bu D."/>
            <person name="Tan J."/>
            <person name="Yang L."/>
            <person name="Ye C."/>
            <person name="Zhang J."/>
            <person name="Xu J."/>
            <person name="Zhou Y."/>
            <person name="Yu Y."/>
            <person name="Zhang B."/>
            <person name="Zhuang S."/>
            <person name="Wei H."/>
            <person name="Liu B."/>
            <person name="Lei M."/>
            <person name="Yu H."/>
            <person name="Li Y."/>
            <person name="Xu H."/>
            <person name="Wei S."/>
            <person name="He X."/>
            <person name="Fang L."/>
            <person name="Zhang Z."/>
            <person name="Zhang Y."/>
            <person name="Huang X."/>
            <person name="Su Z."/>
            <person name="Tong W."/>
            <person name="Li J."/>
            <person name="Tong Z."/>
            <person name="Li S."/>
            <person name="Ye J."/>
            <person name="Wang L."/>
            <person name="Fang L."/>
            <person name="Lei T."/>
            <person name="Chen C.-S."/>
            <person name="Chen H.-C."/>
            <person name="Xu Z."/>
            <person name="Li H."/>
            <person name="Huang H."/>
            <person name="Zhang F."/>
            <person name="Xu H."/>
            <person name="Li N."/>
            <person name="Zhao C."/>
            <person name="Li S."/>
            <person name="Dong L."/>
            <person name="Huang Y."/>
            <person name="Li L."/>
            <person name="Xi Y."/>
            <person name="Qi Q."/>
            <person name="Li W."/>
            <person name="Zhang B."/>
            <person name="Hu W."/>
            <person name="Zhang Y."/>
            <person name="Tian X."/>
            <person name="Jiao Y."/>
            <person name="Liang X."/>
            <person name="Jin J."/>
            <person name="Gao L."/>
            <person name="Zheng W."/>
            <person name="Hao B."/>
            <person name="Liu S.-M."/>
            <person name="Wang W."/>
            <person name="Yuan L."/>
            <person name="Cao M."/>
            <person name="McDermott J."/>
            <person name="Samudrala R."/>
            <person name="Wang J."/>
            <person name="Wong G.K.-S."/>
            <person name="Yang H."/>
        </authorList>
    </citation>
    <scope>NUCLEOTIDE SEQUENCE [LARGE SCALE GENOMIC DNA]</scope>
    <source>
        <strain>cv. 93-11</strain>
    </source>
</reference>